<proteinExistence type="inferred from homology"/>
<protein>
    <recommendedName>
        <fullName evidence="1">Phosphopentomutase</fullName>
        <ecNumber evidence="1">5.4.2.7</ecNumber>
    </recommendedName>
    <alternativeName>
        <fullName evidence="1">Phosphodeoxyribomutase</fullName>
    </alternativeName>
</protein>
<evidence type="ECO:0000255" key="1">
    <source>
        <dbReference type="HAMAP-Rule" id="MF_00740"/>
    </source>
</evidence>
<name>DEOB_METEP</name>
<accession>A9W427</accession>
<sequence length="406" mass="42229">MARALLIVLDSVGIGGAPDADRYGDAGSDTVGHIAEACAAGRGDRPGLRAGPLHLPNLAALGLGLACEGATGRVPPGLAPEGPVRALWGHAVETAAGKDTPSGHWEIAGVPVREAWGHFPDTQPAFPAELTAALVARAGLPGILGDCHASGTAIIEALGAEHVRTGKPICYTSADSVFQIAAHEEAFGLERLYETCRIAREVCDPYRVGRVIARPFLGSAAEGFRRTSHRKDFSVAPPAGTLLDGLETAGRAVVSVGKIGDIFAHRATGREIKPAGNAACLDAALDAFAGLPEGGFVFLNLVDFDTEHGHRRDVPGYAAELEAFDRRLPEIQAVLKPGDLCVITADHGNDPTWTGTEHTREQVPVLAFGPGLAPRALGRRESFADMGASVAAHLGLPPLGAGQAWW</sequence>
<keyword id="KW-0963">Cytoplasm</keyword>
<keyword id="KW-0413">Isomerase</keyword>
<keyword id="KW-0464">Manganese</keyword>
<keyword id="KW-0479">Metal-binding</keyword>
<organism>
    <name type="scientific">Methylorubrum extorquens (strain PA1)</name>
    <name type="common">Methylobacterium extorquens</name>
    <dbReference type="NCBI Taxonomy" id="419610"/>
    <lineage>
        <taxon>Bacteria</taxon>
        <taxon>Pseudomonadati</taxon>
        <taxon>Pseudomonadota</taxon>
        <taxon>Alphaproteobacteria</taxon>
        <taxon>Hyphomicrobiales</taxon>
        <taxon>Methylobacteriaceae</taxon>
        <taxon>Methylorubrum</taxon>
    </lineage>
</organism>
<reference key="1">
    <citation type="submission" date="2007-12" db="EMBL/GenBank/DDBJ databases">
        <title>Complete sequence of Methylobacterium extorquens PA1.</title>
        <authorList>
            <consortium name="US DOE Joint Genome Institute"/>
            <person name="Copeland A."/>
            <person name="Lucas S."/>
            <person name="Lapidus A."/>
            <person name="Barry K."/>
            <person name="Glavina del Rio T."/>
            <person name="Dalin E."/>
            <person name="Tice H."/>
            <person name="Pitluck S."/>
            <person name="Saunders E."/>
            <person name="Brettin T."/>
            <person name="Bruce D."/>
            <person name="Detter J.C."/>
            <person name="Han C."/>
            <person name="Schmutz J."/>
            <person name="Larimer F."/>
            <person name="Land M."/>
            <person name="Hauser L."/>
            <person name="Kyrpides N."/>
            <person name="Kim E."/>
            <person name="Marx C."/>
            <person name="Richardson P."/>
        </authorList>
    </citation>
    <scope>NUCLEOTIDE SEQUENCE [LARGE SCALE GENOMIC DNA]</scope>
    <source>
        <strain>PA1</strain>
    </source>
</reference>
<dbReference type="EC" id="5.4.2.7" evidence="1"/>
<dbReference type="EMBL" id="CP000908">
    <property type="protein sequence ID" value="ABY30333.1"/>
    <property type="molecule type" value="Genomic_DNA"/>
</dbReference>
<dbReference type="RefSeq" id="WP_012253480.1">
    <property type="nucleotide sequence ID" value="NC_010172.1"/>
</dbReference>
<dbReference type="SMR" id="A9W427"/>
<dbReference type="KEGG" id="mex:Mext_1934"/>
<dbReference type="eggNOG" id="COG1015">
    <property type="taxonomic scope" value="Bacteria"/>
</dbReference>
<dbReference type="HOGENOM" id="CLU_053861_0_0_5"/>
<dbReference type="BioCyc" id="MEXT419610:MEXT_RS09795-MONOMER"/>
<dbReference type="UniPathway" id="UPA00002">
    <property type="reaction ID" value="UER00467"/>
</dbReference>
<dbReference type="GO" id="GO:0005829">
    <property type="term" value="C:cytosol"/>
    <property type="evidence" value="ECO:0007669"/>
    <property type="project" value="TreeGrafter"/>
</dbReference>
<dbReference type="GO" id="GO:0000287">
    <property type="term" value="F:magnesium ion binding"/>
    <property type="evidence" value="ECO:0007669"/>
    <property type="project" value="InterPro"/>
</dbReference>
<dbReference type="GO" id="GO:0030145">
    <property type="term" value="F:manganese ion binding"/>
    <property type="evidence" value="ECO:0007669"/>
    <property type="project" value="UniProtKB-UniRule"/>
</dbReference>
<dbReference type="GO" id="GO:0008973">
    <property type="term" value="F:phosphopentomutase activity"/>
    <property type="evidence" value="ECO:0007669"/>
    <property type="project" value="UniProtKB-UniRule"/>
</dbReference>
<dbReference type="GO" id="GO:0006018">
    <property type="term" value="P:2-deoxyribose 1-phosphate catabolic process"/>
    <property type="evidence" value="ECO:0007669"/>
    <property type="project" value="UniProtKB-UniRule"/>
</dbReference>
<dbReference type="GO" id="GO:0006015">
    <property type="term" value="P:5-phosphoribose 1-diphosphate biosynthetic process"/>
    <property type="evidence" value="ECO:0007669"/>
    <property type="project" value="UniProtKB-UniPathway"/>
</dbReference>
<dbReference type="GO" id="GO:0043094">
    <property type="term" value="P:metabolic compound salvage"/>
    <property type="evidence" value="ECO:0007669"/>
    <property type="project" value="InterPro"/>
</dbReference>
<dbReference type="GO" id="GO:0009117">
    <property type="term" value="P:nucleotide metabolic process"/>
    <property type="evidence" value="ECO:0007669"/>
    <property type="project" value="InterPro"/>
</dbReference>
<dbReference type="CDD" id="cd16009">
    <property type="entry name" value="PPM"/>
    <property type="match status" value="1"/>
</dbReference>
<dbReference type="FunFam" id="3.30.70.1250:FF:000001">
    <property type="entry name" value="Phosphopentomutase"/>
    <property type="match status" value="1"/>
</dbReference>
<dbReference type="Gene3D" id="3.40.720.10">
    <property type="entry name" value="Alkaline Phosphatase, subunit A"/>
    <property type="match status" value="1"/>
</dbReference>
<dbReference type="Gene3D" id="3.30.70.1250">
    <property type="entry name" value="Phosphopentomutase"/>
    <property type="match status" value="1"/>
</dbReference>
<dbReference type="HAMAP" id="MF_00740">
    <property type="entry name" value="Phosphopentomut"/>
    <property type="match status" value="1"/>
</dbReference>
<dbReference type="InterPro" id="IPR017850">
    <property type="entry name" value="Alkaline_phosphatase_core_sf"/>
</dbReference>
<dbReference type="InterPro" id="IPR010045">
    <property type="entry name" value="DeoB"/>
</dbReference>
<dbReference type="InterPro" id="IPR006124">
    <property type="entry name" value="Metalloenzyme"/>
</dbReference>
<dbReference type="InterPro" id="IPR024052">
    <property type="entry name" value="Phosphopentomutase_DeoB_cap_sf"/>
</dbReference>
<dbReference type="NCBIfam" id="TIGR01696">
    <property type="entry name" value="deoB"/>
    <property type="match status" value="1"/>
</dbReference>
<dbReference type="NCBIfam" id="NF003766">
    <property type="entry name" value="PRK05362.1"/>
    <property type="match status" value="1"/>
</dbReference>
<dbReference type="PANTHER" id="PTHR21110">
    <property type="entry name" value="PHOSPHOPENTOMUTASE"/>
    <property type="match status" value="1"/>
</dbReference>
<dbReference type="PANTHER" id="PTHR21110:SF0">
    <property type="entry name" value="PHOSPHOPENTOMUTASE"/>
    <property type="match status" value="1"/>
</dbReference>
<dbReference type="Pfam" id="PF01676">
    <property type="entry name" value="Metalloenzyme"/>
    <property type="match status" value="1"/>
</dbReference>
<dbReference type="PIRSF" id="PIRSF001491">
    <property type="entry name" value="Ppentomutase"/>
    <property type="match status" value="1"/>
</dbReference>
<dbReference type="SUPFAM" id="SSF53649">
    <property type="entry name" value="Alkaline phosphatase-like"/>
    <property type="match status" value="1"/>
</dbReference>
<dbReference type="SUPFAM" id="SSF143856">
    <property type="entry name" value="DeoB insert domain-like"/>
    <property type="match status" value="1"/>
</dbReference>
<feature type="chain" id="PRO_1000133086" description="Phosphopentomutase">
    <location>
        <begin position="1"/>
        <end position="406"/>
    </location>
</feature>
<feature type="binding site" evidence="1">
    <location>
        <position position="10"/>
    </location>
    <ligand>
        <name>Mn(2+)</name>
        <dbReference type="ChEBI" id="CHEBI:29035"/>
        <label>1</label>
    </ligand>
</feature>
<feature type="binding site" evidence="1">
    <location>
        <position position="305"/>
    </location>
    <ligand>
        <name>Mn(2+)</name>
        <dbReference type="ChEBI" id="CHEBI:29035"/>
        <label>2</label>
    </ligand>
</feature>
<feature type="binding site" evidence="1">
    <location>
        <position position="310"/>
    </location>
    <ligand>
        <name>Mn(2+)</name>
        <dbReference type="ChEBI" id="CHEBI:29035"/>
        <label>2</label>
    </ligand>
</feature>
<feature type="binding site" evidence="1">
    <location>
        <position position="346"/>
    </location>
    <ligand>
        <name>Mn(2+)</name>
        <dbReference type="ChEBI" id="CHEBI:29035"/>
        <label>1</label>
    </ligand>
</feature>
<feature type="binding site" evidence="1">
    <location>
        <position position="347"/>
    </location>
    <ligand>
        <name>Mn(2+)</name>
        <dbReference type="ChEBI" id="CHEBI:29035"/>
        <label>1</label>
    </ligand>
</feature>
<feature type="binding site" evidence="1">
    <location>
        <position position="358"/>
    </location>
    <ligand>
        <name>Mn(2+)</name>
        <dbReference type="ChEBI" id="CHEBI:29035"/>
        <label>2</label>
    </ligand>
</feature>
<comment type="function">
    <text evidence="1">Isomerase that catalyzes the conversion of deoxy-ribose 1-phosphate (dRib-1-P) and ribose 1-phosphate (Rib-1-P) to deoxy-ribose 5-phosphate (dRib-5-P) and ribose 5-phosphate (Rib-5-P), respectively.</text>
</comment>
<comment type="catalytic activity">
    <reaction evidence="1">
        <text>2-deoxy-alpha-D-ribose 1-phosphate = 2-deoxy-D-ribose 5-phosphate</text>
        <dbReference type="Rhea" id="RHEA:27658"/>
        <dbReference type="ChEBI" id="CHEBI:57259"/>
        <dbReference type="ChEBI" id="CHEBI:62877"/>
        <dbReference type="EC" id="5.4.2.7"/>
    </reaction>
</comment>
<comment type="catalytic activity">
    <reaction evidence="1">
        <text>alpha-D-ribose 1-phosphate = D-ribose 5-phosphate</text>
        <dbReference type="Rhea" id="RHEA:18793"/>
        <dbReference type="ChEBI" id="CHEBI:57720"/>
        <dbReference type="ChEBI" id="CHEBI:78346"/>
        <dbReference type="EC" id="5.4.2.7"/>
    </reaction>
</comment>
<comment type="cofactor">
    <cofactor evidence="1">
        <name>Mn(2+)</name>
        <dbReference type="ChEBI" id="CHEBI:29035"/>
    </cofactor>
    <text evidence="1">Binds 2 manganese ions.</text>
</comment>
<comment type="pathway">
    <text evidence="1">Carbohydrate degradation; 2-deoxy-D-ribose 1-phosphate degradation; D-glyceraldehyde 3-phosphate and acetaldehyde from 2-deoxy-alpha-D-ribose 1-phosphate: step 1/2.</text>
</comment>
<comment type="subcellular location">
    <subcellularLocation>
        <location evidence="1">Cytoplasm</location>
    </subcellularLocation>
</comment>
<comment type="similarity">
    <text evidence="1">Belongs to the phosphopentomutase family.</text>
</comment>
<gene>
    <name evidence="1" type="primary">deoB</name>
    <name type="ordered locus">Mext_1934</name>
</gene>